<comment type="catalytic activity">
    <reaction evidence="1">
        <text>tRNA(Asn) + L-asparagine + ATP = L-asparaginyl-tRNA(Asn) + AMP + diphosphate + H(+)</text>
        <dbReference type="Rhea" id="RHEA:11180"/>
        <dbReference type="Rhea" id="RHEA-COMP:9659"/>
        <dbReference type="Rhea" id="RHEA-COMP:9674"/>
        <dbReference type="ChEBI" id="CHEBI:15378"/>
        <dbReference type="ChEBI" id="CHEBI:30616"/>
        <dbReference type="ChEBI" id="CHEBI:33019"/>
        <dbReference type="ChEBI" id="CHEBI:58048"/>
        <dbReference type="ChEBI" id="CHEBI:78442"/>
        <dbReference type="ChEBI" id="CHEBI:78515"/>
        <dbReference type="ChEBI" id="CHEBI:456215"/>
        <dbReference type="EC" id="6.1.1.22"/>
    </reaction>
</comment>
<comment type="subunit">
    <text evidence="1">Homodimer.</text>
</comment>
<comment type="subcellular location">
    <subcellularLocation>
        <location evidence="1">Cytoplasm</location>
    </subcellularLocation>
</comment>
<comment type="similarity">
    <text evidence="1">Belongs to the class-II aminoacyl-tRNA synthetase family.</text>
</comment>
<reference key="1">
    <citation type="journal article" date="2006" name="Proc. Natl. Acad. Sci. U.S.A.">
        <title>Molecular genetic anatomy of inter- and intraserotype variation in the human bacterial pathogen group A Streptococcus.</title>
        <authorList>
            <person name="Beres S.B."/>
            <person name="Richter E.W."/>
            <person name="Nagiec M.J."/>
            <person name="Sumby P."/>
            <person name="Porcella S.F."/>
            <person name="DeLeo F.R."/>
            <person name="Musser J.M."/>
        </authorList>
    </citation>
    <scope>NUCLEOTIDE SEQUENCE [LARGE SCALE GENOMIC DNA]</scope>
    <source>
        <strain>MGAS9429</strain>
    </source>
</reference>
<gene>
    <name evidence="1" type="primary">asnS</name>
    <name type="ordered locus">MGAS9429_Spy0528</name>
</gene>
<proteinExistence type="inferred from homology"/>
<keyword id="KW-0030">Aminoacyl-tRNA synthetase</keyword>
<keyword id="KW-0067">ATP-binding</keyword>
<keyword id="KW-0963">Cytoplasm</keyword>
<keyword id="KW-0436">Ligase</keyword>
<keyword id="KW-0547">Nucleotide-binding</keyword>
<keyword id="KW-0648">Protein biosynthesis</keyword>
<dbReference type="EC" id="6.1.1.22" evidence="1"/>
<dbReference type="EMBL" id="CP000259">
    <property type="protein sequence ID" value="ABF31716.1"/>
    <property type="molecule type" value="Genomic_DNA"/>
</dbReference>
<dbReference type="RefSeq" id="WP_002990488.1">
    <property type="nucleotide sequence ID" value="NC_008021.1"/>
</dbReference>
<dbReference type="SMR" id="Q1JMN3"/>
<dbReference type="KEGG" id="spk:MGAS9429_Spy0528"/>
<dbReference type="HOGENOM" id="CLU_004553_2_0_9"/>
<dbReference type="Proteomes" id="UP000002433">
    <property type="component" value="Chromosome"/>
</dbReference>
<dbReference type="GO" id="GO:0005737">
    <property type="term" value="C:cytoplasm"/>
    <property type="evidence" value="ECO:0007669"/>
    <property type="project" value="UniProtKB-SubCell"/>
</dbReference>
<dbReference type="GO" id="GO:0004816">
    <property type="term" value="F:asparagine-tRNA ligase activity"/>
    <property type="evidence" value="ECO:0007669"/>
    <property type="project" value="UniProtKB-UniRule"/>
</dbReference>
<dbReference type="GO" id="GO:0005524">
    <property type="term" value="F:ATP binding"/>
    <property type="evidence" value="ECO:0007669"/>
    <property type="project" value="UniProtKB-UniRule"/>
</dbReference>
<dbReference type="GO" id="GO:0140096">
    <property type="term" value="F:catalytic activity, acting on a protein"/>
    <property type="evidence" value="ECO:0007669"/>
    <property type="project" value="UniProtKB-ARBA"/>
</dbReference>
<dbReference type="GO" id="GO:0003676">
    <property type="term" value="F:nucleic acid binding"/>
    <property type="evidence" value="ECO:0007669"/>
    <property type="project" value="InterPro"/>
</dbReference>
<dbReference type="GO" id="GO:0016740">
    <property type="term" value="F:transferase activity"/>
    <property type="evidence" value="ECO:0007669"/>
    <property type="project" value="UniProtKB-ARBA"/>
</dbReference>
<dbReference type="GO" id="GO:0006421">
    <property type="term" value="P:asparaginyl-tRNA aminoacylation"/>
    <property type="evidence" value="ECO:0007669"/>
    <property type="project" value="UniProtKB-UniRule"/>
</dbReference>
<dbReference type="CDD" id="cd04323">
    <property type="entry name" value="AsnRS_cyto_like_N"/>
    <property type="match status" value="1"/>
</dbReference>
<dbReference type="CDD" id="cd00776">
    <property type="entry name" value="AsxRS_core"/>
    <property type="match status" value="1"/>
</dbReference>
<dbReference type="Gene3D" id="3.30.930.10">
    <property type="entry name" value="Bira Bifunctional Protein, Domain 2"/>
    <property type="match status" value="1"/>
</dbReference>
<dbReference type="Gene3D" id="2.40.50.140">
    <property type="entry name" value="Nucleic acid-binding proteins"/>
    <property type="match status" value="1"/>
</dbReference>
<dbReference type="HAMAP" id="MF_00534">
    <property type="entry name" value="Asn_tRNA_synth"/>
    <property type="match status" value="1"/>
</dbReference>
<dbReference type="InterPro" id="IPR004364">
    <property type="entry name" value="Aa-tRNA-synt_II"/>
</dbReference>
<dbReference type="InterPro" id="IPR006195">
    <property type="entry name" value="aa-tRNA-synth_II"/>
</dbReference>
<dbReference type="InterPro" id="IPR045864">
    <property type="entry name" value="aa-tRNA-synth_II/BPL/LPL"/>
</dbReference>
<dbReference type="InterPro" id="IPR004522">
    <property type="entry name" value="Asn-tRNA-ligase"/>
</dbReference>
<dbReference type="InterPro" id="IPR002312">
    <property type="entry name" value="Asp/Asn-tRNA-synth_IIb"/>
</dbReference>
<dbReference type="InterPro" id="IPR012340">
    <property type="entry name" value="NA-bd_OB-fold"/>
</dbReference>
<dbReference type="InterPro" id="IPR004365">
    <property type="entry name" value="NA-bd_OB_tRNA"/>
</dbReference>
<dbReference type="NCBIfam" id="TIGR00457">
    <property type="entry name" value="asnS"/>
    <property type="match status" value="1"/>
</dbReference>
<dbReference type="NCBIfam" id="NF003037">
    <property type="entry name" value="PRK03932.1"/>
    <property type="match status" value="1"/>
</dbReference>
<dbReference type="PANTHER" id="PTHR22594:SF34">
    <property type="entry name" value="ASPARAGINE--TRNA LIGASE, MITOCHONDRIAL-RELATED"/>
    <property type="match status" value="1"/>
</dbReference>
<dbReference type="PANTHER" id="PTHR22594">
    <property type="entry name" value="ASPARTYL/LYSYL-TRNA SYNTHETASE"/>
    <property type="match status" value="1"/>
</dbReference>
<dbReference type="Pfam" id="PF00152">
    <property type="entry name" value="tRNA-synt_2"/>
    <property type="match status" value="1"/>
</dbReference>
<dbReference type="Pfam" id="PF01336">
    <property type="entry name" value="tRNA_anti-codon"/>
    <property type="match status" value="1"/>
</dbReference>
<dbReference type="PRINTS" id="PR01042">
    <property type="entry name" value="TRNASYNTHASP"/>
</dbReference>
<dbReference type="SUPFAM" id="SSF55681">
    <property type="entry name" value="Class II aaRS and biotin synthetases"/>
    <property type="match status" value="1"/>
</dbReference>
<dbReference type="SUPFAM" id="SSF50249">
    <property type="entry name" value="Nucleic acid-binding proteins"/>
    <property type="match status" value="1"/>
</dbReference>
<dbReference type="PROSITE" id="PS50862">
    <property type="entry name" value="AA_TRNA_LIGASE_II"/>
    <property type="match status" value="1"/>
</dbReference>
<feature type="chain" id="PRO_1000051443" description="Asparagine--tRNA ligase">
    <location>
        <begin position="1"/>
        <end position="448"/>
    </location>
</feature>
<accession>Q1JMN3</accession>
<organism>
    <name type="scientific">Streptococcus pyogenes serotype M12 (strain MGAS9429)</name>
    <dbReference type="NCBI Taxonomy" id="370551"/>
    <lineage>
        <taxon>Bacteria</taxon>
        <taxon>Bacillati</taxon>
        <taxon>Bacillota</taxon>
        <taxon>Bacilli</taxon>
        <taxon>Lactobacillales</taxon>
        <taxon>Streptococcaceae</taxon>
        <taxon>Streptococcus</taxon>
    </lineage>
</organism>
<protein>
    <recommendedName>
        <fullName evidence="1">Asparagine--tRNA ligase</fullName>
        <ecNumber evidence="1">6.1.1.22</ecNumber>
    </recommendedName>
    <alternativeName>
        <fullName evidence="1">Asparaginyl-tRNA synthetase</fullName>
        <shortName evidence="1">AsnRS</shortName>
    </alternativeName>
</protein>
<evidence type="ECO:0000255" key="1">
    <source>
        <dbReference type="HAMAP-Rule" id="MF_00534"/>
    </source>
</evidence>
<sequence>MSKKLISIVDVKDYVGQEVTIGAWVTNKSGKGKIAFVQLRDGSAFFQGVAFKPNFIEKYGEESGLEKFDVIKRLNQETSVYVTGIVKEDERSKFGYELDITDLEIIGESHEYPITPKEHGTDFLMDNRHLWLRSRKQMAVMQIRNAIIYATYEFFDQNGFIKFDSPILSENAAEDSTELFETDYFGKPAFLSQSGQLYLEAGAMALGRVFDFGPVFRAEKSKTRRHLTEFWMMDAEYSFLSHEESLDLQEAYVKALIQGVLDRAPQALDILERDVEALKRYITEPFKRVSYDDAITLLQEHEADEDTDYEHLEHGDDFGSPHETWISNYFGVPTFVVNYPASFKAFYMKPVPGNPERVLCADLLAPEGYGEIIGGSMREDNYDALVAKMDELGMDKSEYDFYLDLRKYGSVPHGGFGIGIERMVTFVAGTKHIREAIPFPRMLHRIRP</sequence>
<name>SYN_STRPC</name>